<proteinExistence type="uncertain"/>
<dbReference type="EMBL" id="AK096828">
    <property type="protein sequence ID" value="BAC04871.1"/>
    <property type="molecule type" value="mRNA"/>
</dbReference>
<dbReference type="EMBL" id="AK316503">
    <property type="protein sequence ID" value="BAH14874.1"/>
    <property type="status" value="ALT_SEQ"/>
    <property type="molecule type" value="mRNA"/>
</dbReference>
<dbReference type="EMBL" id="CR749224">
    <property type="protein sequence ID" value="CAH18080.1"/>
    <property type="status" value="ALT_SEQ"/>
    <property type="molecule type" value="mRNA"/>
</dbReference>
<dbReference type="EMBL" id="AC010487">
    <property type="status" value="NOT_ANNOTATED_CDS"/>
    <property type="molecule type" value="Genomic_DNA"/>
</dbReference>
<dbReference type="EMBL" id="BC046449">
    <property type="protein sequence ID" value="AAH46449.2"/>
    <property type="molecule type" value="mRNA"/>
</dbReference>
<dbReference type="EMBL" id="BC119627">
    <property type="protein sequence ID" value="AAI19628.1"/>
    <property type="molecule type" value="mRNA"/>
</dbReference>
<dbReference type="EMBL" id="BC119628">
    <property type="protein sequence ID" value="AAI19629.1"/>
    <property type="molecule type" value="mRNA"/>
</dbReference>
<dbReference type="FunCoup" id="Q8N8H1">
    <property type="interactions" value="1"/>
</dbReference>
<dbReference type="IntAct" id="Q8N8H1">
    <property type="interactions" value="8"/>
</dbReference>
<dbReference type="MINT" id="Q8N8H1"/>
<dbReference type="iPTMnet" id="Q8N8H1"/>
<dbReference type="PhosphoSitePlus" id="Q8N8H1"/>
<dbReference type="BioMuta" id="HGNC:13827"/>
<dbReference type="DMDM" id="327478549"/>
<dbReference type="jPOST" id="Q8N8H1"/>
<dbReference type="MassIVE" id="Q8N8H1"/>
<dbReference type="PaxDb" id="9606-ENSP00000375656"/>
<dbReference type="PeptideAtlas" id="Q8N8H1"/>
<dbReference type="DNASU" id="100529240"/>
<dbReference type="KEGG" id="hsa:100529240"/>
<dbReference type="UCSC" id="uc010eqj.4">
    <property type="organism name" value="human"/>
</dbReference>
<dbReference type="AGR" id="HGNC:13827"/>
<dbReference type="AGR" id="HGNC:38879"/>
<dbReference type="CTD" id="100529240"/>
<dbReference type="GeneCards" id="ZNF321P"/>
<dbReference type="HGNC" id="HGNC:13827">
    <property type="gene designation" value="ZNF321P"/>
</dbReference>
<dbReference type="neXtProt" id="NX_Q8N8H1"/>
<dbReference type="PharmGKB" id="PA37816"/>
<dbReference type="eggNOG" id="KOG1721">
    <property type="taxonomic scope" value="Eukaryota"/>
</dbReference>
<dbReference type="HOGENOM" id="CLU_002678_69_3_1"/>
<dbReference type="InParanoid" id="Q8N8H1"/>
<dbReference type="PAN-GO" id="Q8N8H1">
    <property type="GO annotations" value="0 GO annotations based on evolutionary models"/>
</dbReference>
<dbReference type="PhylomeDB" id="Q8N8H1"/>
<dbReference type="TreeFam" id="TF342644"/>
<dbReference type="PathwayCommons" id="Q8N8H1"/>
<dbReference type="SignaLink" id="Q8N8H1"/>
<dbReference type="BioGRID-ORCS" id="100529240">
    <property type="hits" value="274 hits in 998 CRISPR screens"/>
</dbReference>
<dbReference type="GenomeRNAi" id="100529240"/>
<dbReference type="Pharos" id="Q8N8H1">
    <property type="development level" value="Tdark"/>
</dbReference>
<dbReference type="Proteomes" id="UP000005640">
    <property type="component" value="Unplaced"/>
</dbReference>
<dbReference type="RNAct" id="Q8N8H1">
    <property type="molecule type" value="protein"/>
</dbReference>
<reference key="1">
    <citation type="journal article" date="2004" name="Nat. Genet.">
        <title>Complete sequencing and characterization of 21,243 full-length human cDNAs.</title>
        <authorList>
            <person name="Ota T."/>
            <person name="Suzuki Y."/>
            <person name="Nishikawa T."/>
            <person name="Otsuki T."/>
            <person name="Sugiyama T."/>
            <person name="Irie R."/>
            <person name="Wakamatsu A."/>
            <person name="Hayashi K."/>
            <person name="Sato H."/>
            <person name="Nagai K."/>
            <person name="Kimura K."/>
            <person name="Makita H."/>
            <person name="Sekine M."/>
            <person name="Obayashi M."/>
            <person name="Nishi T."/>
            <person name="Shibahara T."/>
            <person name="Tanaka T."/>
            <person name="Ishii S."/>
            <person name="Yamamoto J."/>
            <person name="Saito K."/>
            <person name="Kawai Y."/>
            <person name="Isono Y."/>
            <person name="Nakamura Y."/>
            <person name="Nagahari K."/>
            <person name="Murakami K."/>
            <person name="Yasuda T."/>
            <person name="Iwayanagi T."/>
            <person name="Wagatsuma M."/>
            <person name="Shiratori A."/>
            <person name="Sudo H."/>
            <person name="Hosoiri T."/>
            <person name="Kaku Y."/>
            <person name="Kodaira H."/>
            <person name="Kondo H."/>
            <person name="Sugawara M."/>
            <person name="Takahashi M."/>
            <person name="Kanda K."/>
            <person name="Yokoi T."/>
            <person name="Furuya T."/>
            <person name="Kikkawa E."/>
            <person name="Omura Y."/>
            <person name="Abe K."/>
            <person name="Kamihara K."/>
            <person name="Katsuta N."/>
            <person name="Sato K."/>
            <person name="Tanikawa M."/>
            <person name="Yamazaki M."/>
            <person name="Ninomiya K."/>
            <person name="Ishibashi T."/>
            <person name="Yamashita H."/>
            <person name="Murakawa K."/>
            <person name="Fujimori K."/>
            <person name="Tanai H."/>
            <person name="Kimata M."/>
            <person name="Watanabe M."/>
            <person name="Hiraoka S."/>
            <person name="Chiba Y."/>
            <person name="Ishida S."/>
            <person name="Ono Y."/>
            <person name="Takiguchi S."/>
            <person name="Watanabe S."/>
            <person name="Yosida M."/>
            <person name="Hotuta T."/>
            <person name="Kusano J."/>
            <person name="Kanehori K."/>
            <person name="Takahashi-Fujii A."/>
            <person name="Hara H."/>
            <person name="Tanase T.-O."/>
            <person name="Nomura Y."/>
            <person name="Togiya S."/>
            <person name="Komai F."/>
            <person name="Hara R."/>
            <person name="Takeuchi K."/>
            <person name="Arita M."/>
            <person name="Imose N."/>
            <person name="Musashino K."/>
            <person name="Yuuki H."/>
            <person name="Oshima A."/>
            <person name="Sasaki N."/>
            <person name="Aotsuka S."/>
            <person name="Yoshikawa Y."/>
            <person name="Matsunawa H."/>
            <person name="Ichihara T."/>
            <person name="Shiohata N."/>
            <person name="Sano S."/>
            <person name="Moriya S."/>
            <person name="Momiyama H."/>
            <person name="Satoh N."/>
            <person name="Takami S."/>
            <person name="Terashima Y."/>
            <person name="Suzuki O."/>
            <person name="Nakagawa S."/>
            <person name="Senoh A."/>
            <person name="Mizoguchi H."/>
            <person name="Goto Y."/>
            <person name="Shimizu F."/>
            <person name="Wakebe H."/>
            <person name="Hishigaki H."/>
            <person name="Watanabe T."/>
            <person name="Sugiyama A."/>
            <person name="Takemoto M."/>
            <person name="Kawakami B."/>
            <person name="Yamazaki M."/>
            <person name="Watanabe K."/>
            <person name="Kumagai A."/>
            <person name="Itakura S."/>
            <person name="Fukuzumi Y."/>
            <person name="Fujimori Y."/>
            <person name="Komiyama M."/>
            <person name="Tashiro H."/>
            <person name="Tanigami A."/>
            <person name="Fujiwara T."/>
            <person name="Ono T."/>
            <person name="Yamada K."/>
            <person name="Fujii Y."/>
            <person name="Ozaki K."/>
            <person name="Hirao M."/>
            <person name="Ohmori Y."/>
            <person name="Kawabata A."/>
            <person name="Hikiji T."/>
            <person name="Kobatake N."/>
            <person name="Inagaki H."/>
            <person name="Ikema Y."/>
            <person name="Okamoto S."/>
            <person name="Okitani R."/>
            <person name="Kawakami T."/>
            <person name="Noguchi S."/>
            <person name="Itoh T."/>
            <person name="Shigeta K."/>
            <person name="Senba T."/>
            <person name="Matsumura K."/>
            <person name="Nakajima Y."/>
            <person name="Mizuno T."/>
            <person name="Morinaga M."/>
            <person name="Sasaki M."/>
            <person name="Togashi T."/>
            <person name="Oyama M."/>
            <person name="Hata H."/>
            <person name="Watanabe M."/>
            <person name="Komatsu T."/>
            <person name="Mizushima-Sugano J."/>
            <person name="Satoh T."/>
            <person name="Shirai Y."/>
            <person name="Takahashi Y."/>
            <person name="Nakagawa K."/>
            <person name="Okumura K."/>
            <person name="Nagase T."/>
            <person name="Nomura N."/>
            <person name="Kikuchi H."/>
            <person name="Masuho Y."/>
            <person name="Yamashita R."/>
            <person name="Nakai K."/>
            <person name="Yada T."/>
            <person name="Nakamura Y."/>
            <person name="Ohara O."/>
            <person name="Isogai T."/>
            <person name="Sugano S."/>
        </authorList>
    </citation>
    <scope>NUCLEOTIDE SEQUENCE [LARGE SCALE MRNA]</scope>
    <source>
        <tissue>Prostate</tissue>
        <tissue>Trachea</tissue>
    </source>
</reference>
<reference key="2">
    <citation type="journal article" date="2007" name="BMC Genomics">
        <title>The full-ORF clone resource of the German cDNA consortium.</title>
        <authorList>
            <person name="Bechtel S."/>
            <person name="Rosenfelder H."/>
            <person name="Duda A."/>
            <person name="Schmidt C.P."/>
            <person name="Ernst U."/>
            <person name="Wellenreuther R."/>
            <person name="Mehrle A."/>
            <person name="Schuster C."/>
            <person name="Bahr A."/>
            <person name="Bloecker H."/>
            <person name="Heubner D."/>
            <person name="Hoerlein A."/>
            <person name="Michel G."/>
            <person name="Wedler H."/>
            <person name="Koehrer K."/>
            <person name="Ottenwaelder B."/>
            <person name="Poustka A."/>
            <person name="Wiemann S."/>
            <person name="Schupp I."/>
        </authorList>
    </citation>
    <scope>NUCLEOTIDE SEQUENCE [LARGE SCALE MRNA]</scope>
    <source>
        <tissue>Colon carcinoma</tissue>
    </source>
</reference>
<reference key="3">
    <citation type="journal article" date="2004" name="Nature">
        <title>The DNA sequence and biology of human chromosome 19.</title>
        <authorList>
            <person name="Grimwood J."/>
            <person name="Gordon L.A."/>
            <person name="Olsen A.S."/>
            <person name="Terry A."/>
            <person name="Schmutz J."/>
            <person name="Lamerdin J.E."/>
            <person name="Hellsten U."/>
            <person name="Goodstein D."/>
            <person name="Couronne O."/>
            <person name="Tran-Gyamfi M."/>
            <person name="Aerts A."/>
            <person name="Altherr M."/>
            <person name="Ashworth L."/>
            <person name="Bajorek E."/>
            <person name="Black S."/>
            <person name="Branscomb E."/>
            <person name="Caenepeel S."/>
            <person name="Carrano A.V."/>
            <person name="Caoile C."/>
            <person name="Chan Y.M."/>
            <person name="Christensen M."/>
            <person name="Cleland C.A."/>
            <person name="Copeland A."/>
            <person name="Dalin E."/>
            <person name="Dehal P."/>
            <person name="Denys M."/>
            <person name="Detter J.C."/>
            <person name="Escobar J."/>
            <person name="Flowers D."/>
            <person name="Fotopulos D."/>
            <person name="Garcia C."/>
            <person name="Georgescu A.M."/>
            <person name="Glavina T."/>
            <person name="Gomez M."/>
            <person name="Gonzales E."/>
            <person name="Groza M."/>
            <person name="Hammon N."/>
            <person name="Hawkins T."/>
            <person name="Haydu L."/>
            <person name="Ho I."/>
            <person name="Huang W."/>
            <person name="Israni S."/>
            <person name="Jett J."/>
            <person name="Kadner K."/>
            <person name="Kimball H."/>
            <person name="Kobayashi A."/>
            <person name="Larionov V."/>
            <person name="Leem S.-H."/>
            <person name="Lopez F."/>
            <person name="Lou Y."/>
            <person name="Lowry S."/>
            <person name="Malfatti S."/>
            <person name="Martinez D."/>
            <person name="McCready P.M."/>
            <person name="Medina C."/>
            <person name="Morgan J."/>
            <person name="Nelson K."/>
            <person name="Nolan M."/>
            <person name="Ovcharenko I."/>
            <person name="Pitluck S."/>
            <person name="Pollard M."/>
            <person name="Popkie A.P."/>
            <person name="Predki P."/>
            <person name="Quan G."/>
            <person name="Ramirez L."/>
            <person name="Rash S."/>
            <person name="Retterer J."/>
            <person name="Rodriguez A."/>
            <person name="Rogers S."/>
            <person name="Salamov A."/>
            <person name="Salazar A."/>
            <person name="She X."/>
            <person name="Smith D."/>
            <person name="Slezak T."/>
            <person name="Solovyev V."/>
            <person name="Thayer N."/>
            <person name="Tice H."/>
            <person name="Tsai M."/>
            <person name="Ustaszewska A."/>
            <person name="Vo N."/>
            <person name="Wagner M."/>
            <person name="Wheeler J."/>
            <person name="Wu K."/>
            <person name="Xie G."/>
            <person name="Yang J."/>
            <person name="Dubchak I."/>
            <person name="Furey T.S."/>
            <person name="DeJong P."/>
            <person name="Dickson M."/>
            <person name="Gordon D."/>
            <person name="Eichler E.E."/>
            <person name="Pennacchio L.A."/>
            <person name="Richardson P."/>
            <person name="Stubbs L."/>
            <person name="Rokhsar D.S."/>
            <person name="Myers R.M."/>
            <person name="Rubin E.M."/>
            <person name="Lucas S.M."/>
        </authorList>
    </citation>
    <scope>NUCLEOTIDE SEQUENCE [LARGE SCALE GENOMIC DNA]</scope>
</reference>
<reference key="4">
    <citation type="journal article" date="2004" name="Genome Res.">
        <title>The status, quality, and expansion of the NIH full-length cDNA project: the Mammalian Gene Collection (MGC).</title>
        <authorList>
            <consortium name="The MGC Project Team"/>
        </authorList>
    </citation>
    <scope>NUCLEOTIDE SEQUENCE [LARGE SCALE MRNA]</scope>
    <source>
        <tissue>Colon</tissue>
    </source>
</reference>
<gene>
    <name type="primary">ZNF321P</name>
    <name type="synonym">ZNF321</name>
</gene>
<accession>Q8N8H1</accession>
<accession>B7ZB38</accession>
<accession>Q68DZ0</accession>
<accession>Q86SS5</accession>
<evidence type="ECO:0000305" key="1"/>
<feature type="chain" id="PRO_0000294249" description="Putative protein ZNF321">
    <location>
        <begin position="1"/>
        <end position="164"/>
    </location>
</feature>
<comment type="caution">
    <text evidence="1">Could be the product of a pseudogene.</text>
</comment>
<comment type="caution">
    <text evidence="1">Despite its name, it does not contain a zinc-finger domain.</text>
</comment>
<comment type="sequence caution" evidence="1">
    <conflict type="erroneous translation">
        <sequence resource="EMBL-CDS" id="BAH14874"/>
    </conflict>
    <text>Wrong choice of CDS.</text>
</comment>
<comment type="sequence caution" evidence="1">
    <conflict type="miscellaneous discrepancy">
        <sequence resource="EMBL-CDS" id="BAH14874"/>
    </conflict>
    <text>Readthrough transcript ZNF816-ZNF321.</text>
</comment>
<comment type="sequence caution" evidence="1">
    <conflict type="erroneous translation">
        <sequence resource="EMBL-CDS" id="CAH18080"/>
    </conflict>
    <text>Wrong choice of CDS.</text>
</comment>
<comment type="sequence caution" evidence="1">
    <conflict type="miscellaneous discrepancy">
        <sequence resource="EMBL-CDS" id="CAH18080"/>
    </conflict>
    <text>Readthrough transcript ZNF816-ZNF321.</text>
</comment>
<keyword id="KW-1185">Reference proteome</keyword>
<organism>
    <name type="scientific">Homo sapiens</name>
    <name type="common">Human</name>
    <dbReference type="NCBI Taxonomy" id="9606"/>
    <lineage>
        <taxon>Eukaryota</taxon>
        <taxon>Metazoa</taxon>
        <taxon>Chordata</taxon>
        <taxon>Craniata</taxon>
        <taxon>Vertebrata</taxon>
        <taxon>Euteleostomi</taxon>
        <taxon>Mammalia</taxon>
        <taxon>Eutheria</taxon>
        <taxon>Euarchontoglires</taxon>
        <taxon>Primates</taxon>
        <taxon>Haplorrhini</taxon>
        <taxon>Catarrhini</taxon>
        <taxon>Hominidae</taxon>
        <taxon>Homo</taxon>
    </lineage>
</organism>
<name>ZN321_HUMAN</name>
<sequence length="164" mass="18964">MMKEFSSTAQGNTEVIHTGTLQRHESHHIRDFCFQEIEKDIHNFEFQWQEEERNGHEAPMTEIKELTGSTDRHDQRHAGNKPIKDQLGSSFHSHLPELHIFQPEWKIGNQVEKSIINASLILTSQRISCSPKTRISNNYGNNSLHSSLPIQKLGSTHERKIFPM</sequence>
<protein>
    <recommendedName>
        <fullName>Putative protein ZNF321</fullName>
    </recommendedName>
    <alternativeName>
        <fullName>Zinc finger protein 321 pseudogene</fullName>
    </alternativeName>
</protein>